<comment type="subcellular location">
    <subcellularLocation>
        <location evidence="3">Secreted</location>
    </subcellularLocation>
</comment>
<comment type="similarity">
    <text evidence="3">Belongs to the prespore-cell-inducing factor family.</text>
</comment>
<protein>
    <recommendedName>
        <fullName>Protein psiE</fullName>
    </recommendedName>
</protein>
<organism>
    <name type="scientific">Dictyostelium discoideum</name>
    <name type="common">Social amoeba</name>
    <dbReference type="NCBI Taxonomy" id="44689"/>
    <lineage>
        <taxon>Eukaryota</taxon>
        <taxon>Amoebozoa</taxon>
        <taxon>Evosea</taxon>
        <taxon>Eumycetozoa</taxon>
        <taxon>Dictyostelia</taxon>
        <taxon>Dictyosteliales</taxon>
        <taxon>Dictyosteliaceae</taxon>
        <taxon>Dictyostelium</taxon>
    </lineage>
</organism>
<gene>
    <name type="primary">psiE</name>
    <name type="ORF">DDB_G0268556</name>
</gene>
<sequence length="500" mass="54878">MKLISVLITFLLATVIYSQTSPATLKFTVQVYDQFPGFNNNFEPGLGNAITGLIKSTLNSTSRVPELVSTEARIVKNINGGIINPSLFPYFFSPQQDSSLPGQNSPLSLDLIFTYDTTRKIYVYDNQNFFPIDNQGFDVDPAKRIYLNEKKTYHNYHFCMKMNTVFTYKGYEVFNFRGDDDVWVFINNKLVIDLGGLHSPIGTSVDTMTLGLTIGNSYNFDLFFCERHTVGSTIKIETNLLFYCPFKDYCGVCQGDGSSCCNPLTTCNDNNQCTIDSCPSANTIIGPGSIPNYCFHTPKINTNPIDICFNYQCNSSTGNFDPIPIPCLDRSSECLSTIGCNSTVGCQYESICNSNVCNIQNQCSSNGTCVPKSSNDCGIELDGQVDKCKIYSCDSNGGVGCIKEDKCKPSSNPCISTQCNATNGQCYETQIPGDICDCGCGIPENKCKVSWCTPEGICQPKFKSEIDDNNSCTLDSCDPCTGIISHMTAPQCLSCNQCSN</sequence>
<feature type="signal peptide" evidence="1">
    <location>
        <begin position="1"/>
        <end position="18"/>
    </location>
</feature>
<feature type="chain" id="PRO_0000328254" description="Protein psiE">
    <location>
        <begin position="19"/>
        <end position="500"/>
    </location>
</feature>
<feature type="domain" description="PA14" evidence="2">
    <location>
        <begin position="114"/>
        <end position="256"/>
    </location>
</feature>
<feature type="glycosylation site" description="N-linked (GlcNAc...) asparagine" evidence="1">
    <location>
        <position position="59"/>
    </location>
</feature>
<feature type="glycosylation site" description="N-linked (GlcNAc...) asparagine" evidence="1">
    <location>
        <position position="314"/>
    </location>
</feature>
<feature type="glycosylation site" description="N-linked (GlcNAc...) asparagine" evidence="1">
    <location>
        <position position="341"/>
    </location>
</feature>
<feature type="glycosylation site" description="N-linked (GlcNAc...) asparagine" evidence="1">
    <location>
        <position position="366"/>
    </location>
</feature>
<feature type="glycosylation site" description="N-linked (GlcNAc...) asparagine" evidence="1">
    <location>
        <position position="420"/>
    </location>
</feature>
<feature type="glycosylation site" description="N-linked (GlcNAc...) asparagine" evidence="1">
    <location>
        <position position="469"/>
    </location>
</feature>
<keyword id="KW-0325">Glycoprotein</keyword>
<keyword id="KW-1185">Reference proteome</keyword>
<keyword id="KW-0964">Secreted</keyword>
<keyword id="KW-0732">Signal</keyword>
<evidence type="ECO:0000255" key="1"/>
<evidence type="ECO:0000255" key="2">
    <source>
        <dbReference type="PROSITE-ProRule" id="PRU01164"/>
    </source>
</evidence>
<evidence type="ECO:0000305" key="3"/>
<name>PSIE_DICDI</name>
<dbReference type="EMBL" id="AAFI02000003">
    <property type="protein sequence ID" value="EEU04161.1"/>
    <property type="molecule type" value="Genomic_DNA"/>
</dbReference>
<dbReference type="RefSeq" id="XP_002649211.1">
    <property type="nucleotide sequence ID" value="XM_002649165.1"/>
</dbReference>
<dbReference type="FunCoup" id="Q55FQ6">
    <property type="interactions" value="12"/>
</dbReference>
<dbReference type="GlyCosmos" id="Q55FQ6">
    <property type="glycosylation" value="6 sites, No reported glycans"/>
</dbReference>
<dbReference type="GlyGen" id="Q55FQ6">
    <property type="glycosylation" value="6 sites"/>
</dbReference>
<dbReference type="PaxDb" id="44689-DDB0266344"/>
<dbReference type="EnsemblProtists" id="EEU04161">
    <property type="protein sequence ID" value="EEU04161"/>
    <property type="gene ID" value="DDB_G0268556"/>
</dbReference>
<dbReference type="GeneID" id="8616285"/>
<dbReference type="KEGG" id="ddi:DDB_G0268556"/>
<dbReference type="dictyBase" id="DDB_G0268556">
    <property type="gene designation" value="psiE"/>
</dbReference>
<dbReference type="VEuPathDB" id="AmoebaDB:DDB_G0268556"/>
<dbReference type="eggNOG" id="ENOG502QQ2D">
    <property type="taxonomic scope" value="Eukaryota"/>
</dbReference>
<dbReference type="HOGENOM" id="CLU_024170_0_0_1"/>
<dbReference type="InParanoid" id="Q55FQ6"/>
<dbReference type="OMA" id="DSCPSAN"/>
<dbReference type="PhylomeDB" id="Q55FQ6"/>
<dbReference type="PRO" id="PR:Q55FQ6"/>
<dbReference type="Proteomes" id="UP000002195">
    <property type="component" value="Chromosome 1"/>
</dbReference>
<dbReference type="GO" id="GO:0005576">
    <property type="term" value="C:extracellular region"/>
    <property type="evidence" value="ECO:0000318"/>
    <property type="project" value="GO_Central"/>
</dbReference>
<dbReference type="InterPro" id="IPR011874">
    <property type="entry name" value="Fibro_Slime"/>
</dbReference>
<dbReference type="InterPro" id="IPR037524">
    <property type="entry name" value="PA14/GLEYA"/>
</dbReference>
<dbReference type="InterPro" id="IPR011658">
    <property type="entry name" value="PA14_dom"/>
</dbReference>
<dbReference type="InterPro" id="IPR051154">
    <property type="entry name" value="Prespore-cell_inducing_factor"/>
</dbReference>
<dbReference type="InterPro" id="IPR001673">
    <property type="entry name" value="S_mold_repeat"/>
</dbReference>
<dbReference type="NCBIfam" id="TIGR02148">
    <property type="entry name" value="Fibro_Slime"/>
    <property type="match status" value="1"/>
</dbReference>
<dbReference type="PANTHER" id="PTHR31137:SF8">
    <property type="entry name" value="PROTEIN PSIB-RELATED"/>
    <property type="match status" value="1"/>
</dbReference>
<dbReference type="PANTHER" id="PTHR31137">
    <property type="entry name" value="PROTEIN PSIB-RELATED-RELATED"/>
    <property type="match status" value="1"/>
</dbReference>
<dbReference type="Pfam" id="PF00526">
    <property type="entry name" value="Dicty_CTDC"/>
    <property type="match status" value="2"/>
</dbReference>
<dbReference type="Pfam" id="PF07691">
    <property type="entry name" value="PA14"/>
    <property type="match status" value="1"/>
</dbReference>
<dbReference type="SMART" id="SM00758">
    <property type="entry name" value="PA14"/>
    <property type="match status" value="1"/>
</dbReference>
<dbReference type="PROSITE" id="PS51820">
    <property type="entry name" value="PA14"/>
    <property type="match status" value="1"/>
</dbReference>
<proteinExistence type="inferred from homology"/>
<reference key="1">
    <citation type="journal article" date="2005" name="Nature">
        <title>The genome of the social amoeba Dictyostelium discoideum.</title>
        <authorList>
            <person name="Eichinger L."/>
            <person name="Pachebat J.A."/>
            <person name="Gloeckner G."/>
            <person name="Rajandream M.A."/>
            <person name="Sucgang R."/>
            <person name="Berriman M."/>
            <person name="Song J."/>
            <person name="Olsen R."/>
            <person name="Szafranski K."/>
            <person name="Xu Q."/>
            <person name="Tunggal B."/>
            <person name="Kummerfeld S."/>
            <person name="Madera M."/>
            <person name="Konfortov B.A."/>
            <person name="Rivero F."/>
            <person name="Bankier A.T."/>
            <person name="Lehmann R."/>
            <person name="Hamlin N."/>
            <person name="Davies R."/>
            <person name="Gaudet P."/>
            <person name="Fey P."/>
            <person name="Pilcher K."/>
            <person name="Chen G."/>
            <person name="Saunders D."/>
            <person name="Sodergren E.J."/>
            <person name="Davis P."/>
            <person name="Kerhornou A."/>
            <person name="Nie X."/>
            <person name="Hall N."/>
            <person name="Anjard C."/>
            <person name="Hemphill L."/>
            <person name="Bason N."/>
            <person name="Farbrother P."/>
            <person name="Desany B."/>
            <person name="Just E."/>
            <person name="Morio T."/>
            <person name="Rost R."/>
            <person name="Churcher C.M."/>
            <person name="Cooper J."/>
            <person name="Haydock S."/>
            <person name="van Driessche N."/>
            <person name="Cronin A."/>
            <person name="Goodhead I."/>
            <person name="Muzny D.M."/>
            <person name="Mourier T."/>
            <person name="Pain A."/>
            <person name="Lu M."/>
            <person name="Harper D."/>
            <person name="Lindsay R."/>
            <person name="Hauser H."/>
            <person name="James K.D."/>
            <person name="Quiles M."/>
            <person name="Madan Babu M."/>
            <person name="Saito T."/>
            <person name="Buchrieser C."/>
            <person name="Wardroper A."/>
            <person name="Felder M."/>
            <person name="Thangavelu M."/>
            <person name="Johnson D."/>
            <person name="Knights A."/>
            <person name="Loulseged H."/>
            <person name="Mungall K.L."/>
            <person name="Oliver K."/>
            <person name="Price C."/>
            <person name="Quail M.A."/>
            <person name="Urushihara H."/>
            <person name="Hernandez J."/>
            <person name="Rabbinowitsch E."/>
            <person name="Steffen D."/>
            <person name="Sanders M."/>
            <person name="Ma J."/>
            <person name="Kohara Y."/>
            <person name="Sharp S."/>
            <person name="Simmonds M.N."/>
            <person name="Spiegler S."/>
            <person name="Tivey A."/>
            <person name="Sugano S."/>
            <person name="White B."/>
            <person name="Walker D."/>
            <person name="Woodward J.R."/>
            <person name="Winckler T."/>
            <person name="Tanaka Y."/>
            <person name="Shaulsky G."/>
            <person name="Schleicher M."/>
            <person name="Weinstock G.M."/>
            <person name="Rosenthal A."/>
            <person name="Cox E.C."/>
            <person name="Chisholm R.L."/>
            <person name="Gibbs R.A."/>
            <person name="Loomis W.F."/>
            <person name="Platzer M."/>
            <person name="Kay R.R."/>
            <person name="Williams J.G."/>
            <person name="Dear P.H."/>
            <person name="Noegel A.A."/>
            <person name="Barrell B.G."/>
            <person name="Kuspa A."/>
        </authorList>
    </citation>
    <scope>NUCLEOTIDE SEQUENCE [LARGE SCALE GENOMIC DNA]</scope>
    <source>
        <strain>AX4</strain>
    </source>
</reference>
<accession>Q55FQ6</accession>
<accession>C7FZV8</accession>